<proteinExistence type="inferred from homology"/>
<accession>B7M7V3</accession>
<reference key="1">
    <citation type="journal article" date="2009" name="PLoS Genet.">
        <title>Organised genome dynamics in the Escherichia coli species results in highly diverse adaptive paths.</title>
        <authorList>
            <person name="Touchon M."/>
            <person name="Hoede C."/>
            <person name="Tenaillon O."/>
            <person name="Barbe V."/>
            <person name="Baeriswyl S."/>
            <person name="Bidet P."/>
            <person name="Bingen E."/>
            <person name="Bonacorsi S."/>
            <person name="Bouchier C."/>
            <person name="Bouvet O."/>
            <person name="Calteau A."/>
            <person name="Chiapello H."/>
            <person name="Clermont O."/>
            <person name="Cruveiller S."/>
            <person name="Danchin A."/>
            <person name="Diard M."/>
            <person name="Dossat C."/>
            <person name="Karoui M.E."/>
            <person name="Frapy E."/>
            <person name="Garry L."/>
            <person name="Ghigo J.M."/>
            <person name="Gilles A.M."/>
            <person name="Johnson J."/>
            <person name="Le Bouguenec C."/>
            <person name="Lescat M."/>
            <person name="Mangenot S."/>
            <person name="Martinez-Jehanne V."/>
            <person name="Matic I."/>
            <person name="Nassif X."/>
            <person name="Oztas S."/>
            <person name="Petit M.A."/>
            <person name="Pichon C."/>
            <person name="Rouy Z."/>
            <person name="Ruf C.S."/>
            <person name="Schneider D."/>
            <person name="Tourret J."/>
            <person name="Vacherie B."/>
            <person name="Vallenet D."/>
            <person name="Medigue C."/>
            <person name="Rocha E.P.C."/>
            <person name="Denamur E."/>
        </authorList>
    </citation>
    <scope>NUCLEOTIDE SEQUENCE [LARGE SCALE GENOMIC DNA]</scope>
    <source>
        <strain>IAI1</strain>
    </source>
</reference>
<sequence>MEWSLTQNKLLAFHRLMRTDKPIGALLLLWPTLWALWVATPGVPQLWILAVFVAGVWLMRAAGCVVNDYADRKFDGHVKRTANRPLPSGAVTEKEARALFVVLVLISFLLVLTLNTMTILLSIAALALAWVYPFMKRYTHLPQVVLGAAFGWSIPMAFAAVSESVPLSCWLMFLANILWAVAYDTQYAMVDRDDDVKIGIKSTAILFGQYDKLIIGILQIGVLALMAIIGELNGLGWGYYWSIVVAGALFVYQQKLIANREREACFKAFMNNNYVGLVLFLGLAMSYWHF</sequence>
<name>UBIA_ECO8A</name>
<gene>
    <name evidence="1" type="primary">ubiA</name>
    <name type="ordered locus">ECIAI1_4270</name>
</gene>
<evidence type="ECO:0000255" key="1">
    <source>
        <dbReference type="HAMAP-Rule" id="MF_01635"/>
    </source>
</evidence>
<comment type="function">
    <text evidence="1">Catalyzes the prenylation of para-hydroxybenzoate (PHB) with an all-trans polyprenyl group. Mediates the second step in the final reaction sequence of ubiquinone-8 (UQ-8) biosynthesis, which is the condensation of the polyisoprenoid side chain with PHB, generating the first membrane-bound Q intermediate 3-octaprenyl-4-hydroxybenzoate.</text>
</comment>
<comment type="catalytic activity">
    <reaction evidence="1">
        <text>all-trans-octaprenyl diphosphate + 4-hydroxybenzoate = 4-hydroxy-3-(all-trans-octaprenyl)benzoate + diphosphate</text>
        <dbReference type="Rhea" id="RHEA:27782"/>
        <dbReference type="ChEBI" id="CHEBI:1617"/>
        <dbReference type="ChEBI" id="CHEBI:17879"/>
        <dbReference type="ChEBI" id="CHEBI:33019"/>
        <dbReference type="ChEBI" id="CHEBI:57711"/>
        <dbReference type="EC" id="2.5.1.39"/>
    </reaction>
</comment>
<comment type="cofactor">
    <cofactor evidence="1">
        <name>Mg(2+)</name>
        <dbReference type="ChEBI" id="CHEBI:18420"/>
    </cofactor>
</comment>
<comment type="pathway">
    <text evidence="1">Cofactor biosynthesis; ubiquinone biosynthesis.</text>
</comment>
<comment type="subcellular location">
    <subcellularLocation>
        <location evidence="1">Cell inner membrane</location>
        <topology evidence="1">Multi-pass membrane protein</topology>
    </subcellularLocation>
</comment>
<comment type="similarity">
    <text evidence="1">Belongs to the UbiA prenyltransferase family.</text>
</comment>
<organism>
    <name type="scientific">Escherichia coli O8 (strain IAI1)</name>
    <dbReference type="NCBI Taxonomy" id="585034"/>
    <lineage>
        <taxon>Bacteria</taxon>
        <taxon>Pseudomonadati</taxon>
        <taxon>Pseudomonadota</taxon>
        <taxon>Gammaproteobacteria</taxon>
        <taxon>Enterobacterales</taxon>
        <taxon>Enterobacteriaceae</taxon>
        <taxon>Escherichia</taxon>
    </lineage>
</organism>
<protein>
    <recommendedName>
        <fullName evidence="1">4-hydroxybenzoate octaprenyltransferase</fullName>
        <ecNumber evidence="1">2.5.1.39</ecNumber>
    </recommendedName>
    <alternativeName>
        <fullName evidence="1">4-HB polyprenyltransferase</fullName>
    </alternativeName>
</protein>
<keyword id="KW-0997">Cell inner membrane</keyword>
<keyword id="KW-1003">Cell membrane</keyword>
<keyword id="KW-0460">Magnesium</keyword>
<keyword id="KW-0472">Membrane</keyword>
<keyword id="KW-0808">Transferase</keyword>
<keyword id="KW-0812">Transmembrane</keyword>
<keyword id="KW-1133">Transmembrane helix</keyword>
<keyword id="KW-0831">Ubiquinone biosynthesis</keyword>
<dbReference type="EC" id="2.5.1.39" evidence="1"/>
<dbReference type="EMBL" id="CU928160">
    <property type="protein sequence ID" value="CAR01019.1"/>
    <property type="molecule type" value="Genomic_DNA"/>
</dbReference>
<dbReference type="RefSeq" id="WP_000455228.1">
    <property type="nucleotide sequence ID" value="NC_011741.1"/>
</dbReference>
<dbReference type="SMR" id="B7M7V3"/>
<dbReference type="GeneID" id="75204184"/>
<dbReference type="KEGG" id="ecr:ECIAI1_4270"/>
<dbReference type="HOGENOM" id="CLU_034879_1_0_6"/>
<dbReference type="UniPathway" id="UPA00232"/>
<dbReference type="GO" id="GO:0005886">
    <property type="term" value="C:plasma membrane"/>
    <property type="evidence" value="ECO:0007669"/>
    <property type="project" value="UniProtKB-SubCell"/>
</dbReference>
<dbReference type="GO" id="GO:0008412">
    <property type="term" value="F:4-hydroxybenzoate polyprenyltransferase activity"/>
    <property type="evidence" value="ECO:0007669"/>
    <property type="project" value="UniProtKB-UniRule"/>
</dbReference>
<dbReference type="GO" id="GO:0006744">
    <property type="term" value="P:ubiquinone biosynthetic process"/>
    <property type="evidence" value="ECO:0007669"/>
    <property type="project" value="UniProtKB-UniRule"/>
</dbReference>
<dbReference type="CDD" id="cd13959">
    <property type="entry name" value="PT_UbiA_COQ2"/>
    <property type="match status" value="1"/>
</dbReference>
<dbReference type="FunFam" id="1.10.357.140:FF:000002">
    <property type="entry name" value="4-hydroxybenzoate octaprenyltransferase"/>
    <property type="match status" value="1"/>
</dbReference>
<dbReference type="FunFam" id="1.20.120.1780:FF:000001">
    <property type="entry name" value="4-hydroxybenzoate octaprenyltransferase"/>
    <property type="match status" value="1"/>
</dbReference>
<dbReference type="Gene3D" id="1.10.357.140">
    <property type="entry name" value="UbiA prenyltransferase"/>
    <property type="match status" value="1"/>
</dbReference>
<dbReference type="Gene3D" id="1.20.120.1780">
    <property type="entry name" value="UbiA prenyltransferase"/>
    <property type="match status" value="1"/>
</dbReference>
<dbReference type="HAMAP" id="MF_01635">
    <property type="entry name" value="UbiA"/>
    <property type="match status" value="1"/>
</dbReference>
<dbReference type="InterPro" id="IPR006370">
    <property type="entry name" value="HB_polyprenyltransferase-like"/>
</dbReference>
<dbReference type="InterPro" id="IPR039653">
    <property type="entry name" value="Prenyltransferase"/>
</dbReference>
<dbReference type="InterPro" id="IPR000537">
    <property type="entry name" value="UbiA_prenyltransferase"/>
</dbReference>
<dbReference type="InterPro" id="IPR030470">
    <property type="entry name" value="UbiA_prenylTrfase_CS"/>
</dbReference>
<dbReference type="InterPro" id="IPR044878">
    <property type="entry name" value="UbiA_sf"/>
</dbReference>
<dbReference type="NCBIfam" id="TIGR01474">
    <property type="entry name" value="ubiA_proteo"/>
    <property type="match status" value="1"/>
</dbReference>
<dbReference type="PANTHER" id="PTHR11048:SF28">
    <property type="entry name" value="4-HYDROXYBENZOATE POLYPRENYLTRANSFERASE, MITOCHONDRIAL"/>
    <property type="match status" value="1"/>
</dbReference>
<dbReference type="PANTHER" id="PTHR11048">
    <property type="entry name" value="PRENYLTRANSFERASES"/>
    <property type="match status" value="1"/>
</dbReference>
<dbReference type="Pfam" id="PF01040">
    <property type="entry name" value="UbiA"/>
    <property type="match status" value="1"/>
</dbReference>
<dbReference type="PROSITE" id="PS00943">
    <property type="entry name" value="UBIA"/>
    <property type="match status" value="1"/>
</dbReference>
<feature type="chain" id="PRO_1000186669" description="4-hydroxybenzoate octaprenyltransferase">
    <location>
        <begin position="1"/>
        <end position="290"/>
    </location>
</feature>
<feature type="transmembrane region" description="Helical" evidence="1">
    <location>
        <begin position="23"/>
        <end position="43"/>
    </location>
</feature>
<feature type="transmembrane region" description="Helical" evidence="1">
    <location>
        <begin position="46"/>
        <end position="66"/>
    </location>
</feature>
<feature type="transmembrane region" description="Helical" evidence="1">
    <location>
        <begin position="99"/>
        <end position="119"/>
    </location>
</feature>
<feature type="transmembrane region" description="Helical" evidence="1">
    <location>
        <begin position="141"/>
        <end position="161"/>
    </location>
</feature>
<feature type="transmembrane region" description="Helical" evidence="1">
    <location>
        <begin position="163"/>
        <end position="183"/>
    </location>
</feature>
<feature type="transmembrane region" description="Helical" evidence="1">
    <location>
        <begin position="213"/>
        <end position="233"/>
    </location>
</feature>
<feature type="transmembrane region" description="Helical" evidence="1">
    <location>
        <begin position="234"/>
        <end position="254"/>
    </location>
</feature>
<feature type="transmembrane region" description="Helical" evidence="1">
    <location>
        <begin position="268"/>
        <end position="288"/>
    </location>
</feature>